<evidence type="ECO:0000250" key="1">
    <source>
        <dbReference type="UniProtKB" id="P13671"/>
    </source>
</evidence>
<evidence type="ECO:0000255" key="2"/>
<evidence type="ECO:0000255" key="3">
    <source>
        <dbReference type="PROSITE-ProRule" id="PRU00124"/>
    </source>
</evidence>
<evidence type="ECO:0000255" key="4">
    <source>
        <dbReference type="PROSITE-ProRule" id="PRU00210"/>
    </source>
</evidence>
<evidence type="ECO:0000255" key="5">
    <source>
        <dbReference type="PROSITE-ProRule" id="PRU00302"/>
    </source>
</evidence>
<evidence type="ECO:0000255" key="6">
    <source>
        <dbReference type="PROSITE-ProRule" id="PRU00745"/>
    </source>
</evidence>
<evidence type="ECO:0000255" key="7">
    <source>
        <dbReference type="PROSITE-ProRule" id="PRU00798"/>
    </source>
</evidence>
<evidence type="ECO:0000305" key="8"/>
<name>CO6_RAT</name>
<gene>
    <name type="primary">C6</name>
</gene>
<feature type="signal peptide" evidence="1">
    <location>
        <begin position="1"/>
        <end position="21"/>
    </location>
</feature>
<feature type="chain" id="PRO_0000023582" description="Complement component C6">
    <location>
        <begin position="22"/>
        <end position="934"/>
    </location>
</feature>
<feature type="transmembrane region" description="Beta stranded" evidence="1">
    <location>
        <begin position="278"/>
        <end position="290"/>
    </location>
</feature>
<feature type="transmembrane region" description="Beta stranded" evidence="1">
    <location>
        <begin position="402"/>
        <end position="415"/>
    </location>
</feature>
<feature type="domain" description="TSP type-1 1" evidence="4">
    <location>
        <begin position="22"/>
        <end position="79"/>
    </location>
</feature>
<feature type="domain" description="TSP type-1 2" evidence="4">
    <location>
        <begin position="81"/>
        <end position="134"/>
    </location>
</feature>
<feature type="domain" description="LDL-receptor class A" evidence="3">
    <location>
        <begin position="138"/>
        <end position="175"/>
    </location>
</feature>
<feature type="domain" description="MACPF" evidence="6">
    <location>
        <begin position="176"/>
        <end position="522"/>
    </location>
</feature>
<feature type="domain" description="EGF-like">
    <location>
        <begin position="523"/>
        <end position="553"/>
    </location>
</feature>
<feature type="domain" description="TSP type-1 3" evidence="4">
    <location>
        <begin position="565"/>
        <end position="612"/>
    </location>
</feature>
<feature type="domain" description="Sushi 1" evidence="5">
    <location>
        <begin position="642"/>
        <end position="701"/>
    </location>
</feature>
<feature type="domain" description="Sushi 2" evidence="5">
    <location>
        <begin position="702"/>
        <end position="763"/>
    </location>
</feature>
<feature type="domain" description="Kazal-like 1" evidence="7">
    <location>
        <begin position="780"/>
        <end position="839"/>
    </location>
</feature>
<feature type="domain" description="Kazal-like 2" evidence="7">
    <location>
        <begin position="876"/>
        <end position="934"/>
    </location>
</feature>
<feature type="region of interest" description="CCP 1">
    <location>
        <begin position="611"/>
        <end position="688"/>
    </location>
</feature>
<feature type="region of interest" description="C5B-binding domain">
    <location>
        <begin position="642"/>
        <end position="934"/>
    </location>
</feature>
<feature type="region of interest" description="CCP 2">
    <location>
        <begin position="689"/>
        <end position="765"/>
    </location>
</feature>
<feature type="region of interest" description="Factor I module (FIM) 1">
    <location>
        <begin position="766"/>
        <end position="840"/>
    </location>
</feature>
<feature type="region of interest" description="Factor I module (FIM) 2">
    <location>
        <begin position="858"/>
        <end position="934"/>
    </location>
</feature>
<feature type="binding site" evidence="1">
    <location>
        <position position="156"/>
    </location>
    <ligand>
        <name>Ca(2+)</name>
        <dbReference type="ChEBI" id="CHEBI:29108"/>
    </ligand>
</feature>
<feature type="binding site" evidence="1">
    <location>
        <position position="159"/>
    </location>
    <ligand>
        <name>Ca(2+)</name>
        <dbReference type="ChEBI" id="CHEBI:29108"/>
    </ligand>
</feature>
<feature type="binding site" evidence="1">
    <location>
        <position position="161"/>
    </location>
    <ligand>
        <name>Ca(2+)</name>
        <dbReference type="ChEBI" id="CHEBI:29108"/>
    </ligand>
</feature>
<feature type="binding site" evidence="1">
    <location>
        <position position="163"/>
    </location>
    <ligand>
        <name>Ca(2+)</name>
        <dbReference type="ChEBI" id="CHEBI:29108"/>
    </ligand>
</feature>
<feature type="binding site" evidence="1">
    <location>
        <position position="169"/>
    </location>
    <ligand>
        <name>Ca(2+)</name>
        <dbReference type="ChEBI" id="CHEBI:29108"/>
    </ligand>
</feature>
<feature type="binding site" evidence="1">
    <location>
        <position position="170"/>
    </location>
    <ligand>
        <name>Ca(2+)</name>
        <dbReference type="ChEBI" id="CHEBI:29108"/>
    </ligand>
</feature>
<feature type="glycosylation site" description="C-linked (Man) tryptophan" evidence="1">
    <location>
        <position position="29"/>
    </location>
</feature>
<feature type="glycosylation site" description="C-linked (Man) tryptophan" evidence="1">
    <location>
        <position position="32"/>
    </location>
</feature>
<feature type="glycosylation site" description="O-linked (Fuc...) serine" evidence="1">
    <location>
        <position position="38"/>
    </location>
</feature>
<feature type="glycosylation site" description="C-linked (Man) tryptophan" evidence="1">
    <location>
        <position position="90"/>
    </location>
</feature>
<feature type="glycosylation site" description="N-linked (GlcNAc...) asparagine" evidence="2">
    <location>
        <position position="324"/>
    </location>
</feature>
<feature type="glycosylation site" description="O-linked (Fuc...) threonine" evidence="1">
    <location>
        <position position="392"/>
    </location>
</feature>
<feature type="glycosylation site" description="C-linked (Man) tryptophan" evidence="1">
    <location>
        <position position="568"/>
    </location>
</feature>
<feature type="glycosylation site" description="C-linked (Man) tryptophan" evidence="1">
    <location>
        <position position="571"/>
    </location>
</feature>
<feature type="glycosylation site" description="C-linked (Man) tryptophan" evidence="1">
    <location>
        <position position="574"/>
    </location>
</feature>
<feature type="disulfide bond" evidence="1">
    <location>
        <begin position="22"/>
        <end position="61"/>
    </location>
</feature>
<feature type="disulfide bond" evidence="1">
    <location>
        <begin position="24"/>
        <end position="65"/>
    </location>
</feature>
<feature type="disulfide bond" evidence="1">
    <location>
        <begin position="35"/>
        <end position="73"/>
    </location>
</feature>
<feature type="disulfide bond" evidence="1">
    <location>
        <begin position="39"/>
        <end position="78"/>
    </location>
</feature>
<feature type="disulfide bond" evidence="1">
    <location>
        <begin position="82"/>
        <end position="117"/>
    </location>
</feature>
<feature type="disulfide bond" evidence="1">
    <location>
        <begin position="93"/>
        <end position="127"/>
    </location>
</feature>
<feature type="disulfide bond" evidence="1">
    <location>
        <begin position="96"/>
        <end position="133"/>
    </location>
</feature>
<feature type="disulfide bond" evidence="1">
    <location>
        <begin position="140"/>
        <end position="151"/>
    </location>
</feature>
<feature type="disulfide bond" evidence="1">
    <location>
        <begin position="146"/>
        <end position="164"/>
    </location>
</feature>
<feature type="disulfide bond" evidence="1">
    <location>
        <begin position="158"/>
        <end position="173"/>
    </location>
</feature>
<feature type="disulfide bond" evidence="1">
    <location>
        <begin position="180"/>
        <end position="218"/>
    </location>
</feature>
<feature type="disulfide bond" evidence="1">
    <location>
        <begin position="399"/>
        <end position="420"/>
    </location>
</feature>
<feature type="disulfide bond" evidence="1">
    <location>
        <begin position="499"/>
        <end position="623"/>
    </location>
</feature>
<feature type="disulfide bond" evidence="1">
    <location>
        <begin position="521"/>
        <end position="570"/>
    </location>
</feature>
<feature type="disulfide bond" evidence="1">
    <location>
        <begin position="523"/>
        <end position="539"/>
    </location>
</feature>
<feature type="disulfide bond" evidence="1">
    <location>
        <begin position="526"/>
        <end position="541"/>
    </location>
</feature>
<feature type="disulfide bond" evidence="1">
    <location>
        <begin position="543"/>
        <end position="552"/>
    </location>
</feature>
<feature type="disulfide bond" evidence="1">
    <location>
        <begin position="577"/>
        <end position="611"/>
    </location>
</feature>
<feature type="disulfide bond" evidence="1">
    <location>
        <begin position="589"/>
        <end position="601"/>
    </location>
</feature>
<feature type="disulfide bond" evidence="1">
    <location>
        <begin position="644"/>
        <end position="686"/>
    </location>
</feature>
<feature type="disulfide bond" evidence="1">
    <location>
        <begin position="672"/>
        <end position="699"/>
    </location>
</feature>
<feature type="disulfide bond" evidence="1">
    <location>
        <begin position="704"/>
        <end position="746"/>
    </location>
</feature>
<feature type="disulfide bond" evidence="1">
    <location>
        <begin position="732"/>
        <end position="761"/>
    </location>
</feature>
<feature type="disulfide bond" evidence="1">
    <location>
        <begin position="773"/>
        <end position="823"/>
    </location>
</feature>
<feature type="disulfide bond" evidence="1">
    <location>
        <begin position="784"/>
        <end position="801"/>
    </location>
</feature>
<feature type="disulfide bond" evidence="1">
    <location>
        <begin position="786"/>
        <end position="837"/>
    </location>
</feature>
<feature type="disulfide bond" evidence="1">
    <location>
        <begin position="793"/>
        <end position="816"/>
    </location>
</feature>
<feature type="disulfide bond" evidence="1">
    <location>
        <begin position="862"/>
        <end position="873"/>
    </location>
</feature>
<feature type="disulfide bond" evidence="1">
    <location>
        <begin position="867"/>
        <end position="919"/>
    </location>
</feature>
<feature type="disulfide bond" evidence="1">
    <location>
        <begin position="880"/>
        <end position="897"/>
    </location>
</feature>
<feature type="disulfide bond" evidence="1">
    <location>
        <begin position="882"/>
        <end position="932"/>
    </location>
</feature>
<feature type="disulfide bond" evidence="1">
    <location>
        <begin position="888"/>
        <end position="912"/>
    </location>
</feature>
<protein>
    <recommendedName>
        <fullName>Complement component C6</fullName>
    </recommendedName>
</protein>
<organism>
    <name type="scientific">Rattus norvegicus</name>
    <name type="common">Rat</name>
    <dbReference type="NCBI Taxonomy" id="10116"/>
    <lineage>
        <taxon>Eukaryota</taxon>
        <taxon>Metazoa</taxon>
        <taxon>Chordata</taxon>
        <taxon>Craniata</taxon>
        <taxon>Vertebrata</taxon>
        <taxon>Euteleostomi</taxon>
        <taxon>Mammalia</taxon>
        <taxon>Eutheria</taxon>
        <taxon>Euarchontoglires</taxon>
        <taxon>Glires</taxon>
        <taxon>Rodentia</taxon>
        <taxon>Myomorpha</taxon>
        <taxon>Muroidea</taxon>
        <taxon>Muridae</taxon>
        <taxon>Murinae</taxon>
        <taxon>Rattus</taxon>
    </lineage>
</organism>
<keyword id="KW-0106">Calcium</keyword>
<keyword id="KW-0180">Complement pathway</keyword>
<keyword id="KW-0204">Cytolysis</keyword>
<keyword id="KW-1015">Disulfide bond</keyword>
<keyword id="KW-0245">EGF-like domain</keyword>
<keyword id="KW-0325">Glycoprotein</keyword>
<keyword id="KW-0391">Immunity</keyword>
<keyword id="KW-0399">Innate immunity</keyword>
<keyword id="KW-0472">Membrane</keyword>
<keyword id="KW-0473">Membrane attack complex</keyword>
<keyword id="KW-0479">Metal-binding</keyword>
<keyword id="KW-1185">Reference proteome</keyword>
<keyword id="KW-0677">Repeat</keyword>
<keyword id="KW-0964">Secreted</keyword>
<keyword id="KW-0732">Signal</keyword>
<keyword id="KW-0768">Sushi</keyword>
<keyword id="KW-1052">Target cell membrane</keyword>
<keyword id="KW-1053">Target membrane</keyword>
<keyword id="KW-0812">Transmembrane</keyword>
<keyword id="KW-1134">Transmembrane beta strand</keyword>
<proteinExistence type="evidence at transcript level"/>
<dbReference type="EMBL" id="AY230250">
    <property type="protein sequence ID" value="AAO40768.1"/>
    <property type="molecule type" value="mRNA"/>
</dbReference>
<dbReference type="RefSeq" id="NP_788263.1">
    <property type="nucleotide sequence ID" value="NM_176074.3"/>
</dbReference>
<dbReference type="SMR" id="Q811M5"/>
<dbReference type="BioGRID" id="246424">
    <property type="interactions" value="1"/>
</dbReference>
<dbReference type="FunCoup" id="Q811M5">
    <property type="interactions" value="31"/>
</dbReference>
<dbReference type="STRING" id="10116.ENSRNOP00000029891"/>
<dbReference type="CarbonylDB" id="Q811M5"/>
<dbReference type="GlyCosmos" id="Q811M5">
    <property type="glycosylation" value="9 sites, No reported glycans"/>
</dbReference>
<dbReference type="GlyGen" id="Q811M5">
    <property type="glycosylation" value="9 sites"/>
</dbReference>
<dbReference type="PhosphoSitePlus" id="Q811M5"/>
<dbReference type="PaxDb" id="10116-ENSRNOP00000029891"/>
<dbReference type="GeneID" id="24237"/>
<dbReference type="KEGG" id="rno:24237"/>
<dbReference type="AGR" id="RGD:2238"/>
<dbReference type="CTD" id="729"/>
<dbReference type="RGD" id="2238">
    <property type="gene designation" value="C6"/>
</dbReference>
<dbReference type="eggNOG" id="ENOG502QPIM">
    <property type="taxonomic scope" value="Eukaryota"/>
</dbReference>
<dbReference type="InParanoid" id="Q811M5"/>
<dbReference type="OrthoDB" id="9867095at2759"/>
<dbReference type="PhylomeDB" id="Q811M5"/>
<dbReference type="Reactome" id="R-RNO-166665">
    <property type="pathway name" value="Terminal pathway of complement"/>
</dbReference>
<dbReference type="PRO" id="PR:Q811M5"/>
<dbReference type="Proteomes" id="UP000002494">
    <property type="component" value="Unplaced"/>
</dbReference>
<dbReference type="GO" id="GO:0005615">
    <property type="term" value="C:extracellular space"/>
    <property type="evidence" value="ECO:0000314"/>
    <property type="project" value="RGD"/>
</dbReference>
<dbReference type="GO" id="GO:0005579">
    <property type="term" value="C:membrane attack complex"/>
    <property type="evidence" value="ECO:0000266"/>
    <property type="project" value="RGD"/>
</dbReference>
<dbReference type="GO" id="GO:0006956">
    <property type="term" value="P:complement activation"/>
    <property type="evidence" value="ECO:0000266"/>
    <property type="project" value="RGD"/>
</dbReference>
<dbReference type="GO" id="GO:0006958">
    <property type="term" value="P:complement activation, classical pathway"/>
    <property type="evidence" value="ECO:0007669"/>
    <property type="project" value="UniProtKB-KW"/>
</dbReference>
<dbReference type="GO" id="GO:0001701">
    <property type="term" value="P:in utero embryonic development"/>
    <property type="evidence" value="ECO:0000266"/>
    <property type="project" value="RGD"/>
</dbReference>
<dbReference type="GO" id="GO:0045087">
    <property type="term" value="P:innate immune response"/>
    <property type="evidence" value="ECO:0007669"/>
    <property type="project" value="UniProtKB-KW"/>
</dbReference>
<dbReference type="GO" id="GO:0031640">
    <property type="term" value="P:killing of cells of another organism"/>
    <property type="evidence" value="ECO:0007669"/>
    <property type="project" value="UniProtKB-KW"/>
</dbReference>
<dbReference type="GO" id="GO:0043065">
    <property type="term" value="P:positive regulation of apoptotic process"/>
    <property type="evidence" value="ECO:0000315"/>
    <property type="project" value="RGD"/>
</dbReference>
<dbReference type="CDD" id="cd00033">
    <property type="entry name" value="CCP"/>
    <property type="match status" value="2"/>
</dbReference>
<dbReference type="CDD" id="cd00112">
    <property type="entry name" value="LDLa"/>
    <property type="match status" value="1"/>
</dbReference>
<dbReference type="FunFam" id="2.10.70.10:FF:000093">
    <property type="entry name" value="Complement component C6"/>
    <property type="match status" value="1"/>
</dbReference>
<dbReference type="FunFam" id="4.10.400.10:FF:000065">
    <property type="entry name" value="Transmembrane protease serine 7"/>
    <property type="match status" value="1"/>
</dbReference>
<dbReference type="FunFam" id="2.20.100.10:FF:000002">
    <property type="entry name" value="Unc-5 netrin receptor C"/>
    <property type="match status" value="1"/>
</dbReference>
<dbReference type="Gene3D" id="3.30.60.30">
    <property type="match status" value="2"/>
</dbReference>
<dbReference type="Gene3D" id="2.10.70.10">
    <property type="entry name" value="Complement Module, domain 1"/>
    <property type="match status" value="2"/>
</dbReference>
<dbReference type="Gene3D" id="4.10.400.10">
    <property type="entry name" value="Low-density Lipoprotein Receptor"/>
    <property type="match status" value="1"/>
</dbReference>
<dbReference type="Gene3D" id="2.20.100.10">
    <property type="entry name" value="Thrombospondin type-1 (TSP1) repeat"/>
    <property type="match status" value="3"/>
</dbReference>
<dbReference type="InterPro" id="IPR048828">
    <property type="entry name" value="C6_KAZAL"/>
</dbReference>
<dbReference type="InterPro" id="IPR048831">
    <property type="entry name" value="C8A_B_C6_EGF-like"/>
</dbReference>
<dbReference type="InterPro" id="IPR003884">
    <property type="entry name" value="FacI_MAC"/>
</dbReference>
<dbReference type="InterPro" id="IPR002350">
    <property type="entry name" value="Kazal_dom"/>
</dbReference>
<dbReference type="InterPro" id="IPR036055">
    <property type="entry name" value="LDL_receptor-like_sf"/>
</dbReference>
<dbReference type="InterPro" id="IPR023415">
    <property type="entry name" value="LDLR_class-A_CS"/>
</dbReference>
<dbReference type="InterPro" id="IPR002172">
    <property type="entry name" value="LDrepeatLR_classA_rpt"/>
</dbReference>
<dbReference type="InterPro" id="IPR001862">
    <property type="entry name" value="MAC_perforin"/>
</dbReference>
<dbReference type="InterPro" id="IPR020864">
    <property type="entry name" value="MACPF"/>
</dbReference>
<dbReference type="InterPro" id="IPR020863">
    <property type="entry name" value="MACPF_CS"/>
</dbReference>
<dbReference type="InterPro" id="IPR035976">
    <property type="entry name" value="Sushi/SCR/CCP_sf"/>
</dbReference>
<dbReference type="InterPro" id="IPR000436">
    <property type="entry name" value="Sushi_SCR_CCP_dom"/>
</dbReference>
<dbReference type="InterPro" id="IPR000884">
    <property type="entry name" value="TSP1_rpt"/>
</dbReference>
<dbReference type="InterPro" id="IPR036383">
    <property type="entry name" value="TSP1_rpt_sf"/>
</dbReference>
<dbReference type="PANTHER" id="PTHR45742">
    <property type="entry name" value="COMPLEMENT COMPONENT C6"/>
    <property type="match status" value="1"/>
</dbReference>
<dbReference type="PANTHER" id="PTHR45742:SF4">
    <property type="entry name" value="COMPLEMENT COMPONENT C6"/>
    <property type="match status" value="1"/>
</dbReference>
<dbReference type="Pfam" id="PF21195">
    <property type="entry name" value="EGF_C8A_B_C6"/>
    <property type="match status" value="1"/>
</dbReference>
<dbReference type="Pfam" id="PF21288">
    <property type="entry name" value="Kazal_C6"/>
    <property type="match status" value="1"/>
</dbReference>
<dbReference type="Pfam" id="PF00057">
    <property type="entry name" value="Ldl_recept_a"/>
    <property type="match status" value="1"/>
</dbReference>
<dbReference type="Pfam" id="PF01823">
    <property type="entry name" value="MACPF"/>
    <property type="match status" value="1"/>
</dbReference>
<dbReference type="Pfam" id="PF00084">
    <property type="entry name" value="Sushi"/>
    <property type="match status" value="2"/>
</dbReference>
<dbReference type="Pfam" id="PF00090">
    <property type="entry name" value="TSP_1"/>
    <property type="match status" value="2"/>
</dbReference>
<dbReference type="PRINTS" id="PR00764">
    <property type="entry name" value="COMPLEMENTC9"/>
</dbReference>
<dbReference type="SMART" id="SM00032">
    <property type="entry name" value="CCP"/>
    <property type="match status" value="2"/>
</dbReference>
<dbReference type="SMART" id="SM00057">
    <property type="entry name" value="FIMAC"/>
    <property type="match status" value="2"/>
</dbReference>
<dbReference type="SMART" id="SM00192">
    <property type="entry name" value="LDLa"/>
    <property type="match status" value="1"/>
</dbReference>
<dbReference type="SMART" id="SM00457">
    <property type="entry name" value="MACPF"/>
    <property type="match status" value="1"/>
</dbReference>
<dbReference type="SMART" id="SM00209">
    <property type="entry name" value="TSP1"/>
    <property type="match status" value="3"/>
</dbReference>
<dbReference type="SUPFAM" id="SSF57535">
    <property type="entry name" value="Complement control module/SCR domain"/>
    <property type="match status" value="2"/>
</dbReference>
<dbReference type="SUPFAM" id="SSF57424">
    <property type="entry name" value="LDL receptor-like module"/>
    <property type="match status" value="1"/>
</dbReference>
<dbReference type="SUPFAM" id="SSF82895">
    <property type="entry name" value="TSP-1 type 1 repeat"/>
    <property type="match status" value="3"/>
</dbReference>
<dbReference type="PROSITE" id="PS00022">
    <property type="entry name" value="EGF_1"/>
    <property type="match status" value="1"/>
</dbReference>
<dbReference type="PROSITE" id="PS51465">
    <property type="entry name" value="KAZAL_2"/>
    <property type="match status" value="2"/>
</dbReference>
<dbReference type="PROSITE" id="PS01209">
    <property type="entry name" value="LDLRA_1"/>
    <property type="match status" value="1"/>
</dbReference>
<dbReference type="PROSITE" id="PS50068">
    <property type="entry name" value="LDLRA_2"/>
    <property type="match status" value="1"/>
</dbReference>
<dbReference type="PROSITE" id="PS00279">
    <property type="entry name" value="MACPF_1"/>
    <property type="match status" value="1"/>
</dbReference>
<dbReference type="PROSITE" id="PS51412">
    <property type="entry name" value="MACPF_2"/>
    <property type="match status" value="1"/>
</dbReference>
<dbReference type="PROSITE" id="PS50923">
    <property type="entry name" value="SUSHI"/>
    <property type="match status" value="2"/>
</dbReference>
<dbReference type="PROSITE" id="PS50092">
    <property type="entry name" value="TSP1"/>
    <property type="match status" value="3"/>
</dbReference>
<accession>Q811M5</accession>
<comment type="function">
    <text evidence="1">Component of the membrane attack complex (MAC), a multiprotein complex activated by the complement cascade, which inserts into a target cell membrane and forms a pore, leading to target cell membrane rupture and cell lysis. The MAC is initiated by proteolytic cleavage of C5 into complement C5b in response to the classical, alternative, lectin and GZMK complement pathways. The complement pathways consist in a cascade of proteins that leads to phagocytosis and breakdown of pathogens and signaling that strengthens the adaptive immune system. Together with component C5b, involved in MAC complex assembly: complement C5b and C6 associate with the outer leaflet of target cell membrane, reducing the energy for membrane bending.</text>
</comment>
<comment type="activity regulation">
    <text evidence="1">Membrane attack complex (MAC) assembly is inhibited by CD59, thereby protecting self-cells from damage during complement activation. MAC assembly is also inhibited by clusterin (CLU) chaperones that inhibit polymerization of C9.</text>
</comment>
<comment type="subunit">
    <text evidence="1">Component of the membrane attack complex (MAC), composed of complement C5b, C6, C7, C8A, C8B, C8G and multiple copies of the pore-forming subunit C9.</text>
</comment>
<comment type="subcellular location">
    <subcellularLocation>
        <location evidence="1">Secreted</location>
    </subcellularLocation>
    <subcellularLocation>
        <location evidence="1">Target cell membrane</location>
        <topology evidence="1">Multi-pass membrane protein</topology>
    </subcellularLocation>
    <text evidence="1">Secreted as soluble protein. Inserts into the cell membrane of target cells.</text>
</comment>
<comment type="PTM">
    <text evidence="1">All cysteine residues are assumed to be cross-linked to one another. Individual modules containing an even number of conserved cysteine residues are supposed to have disulfide linkages only within the same module.</text>
</comment>
<comment type="similarity">
    <text evidence="8">Belongs to the complement C6/C7/C8/C9 family.</text>
</comment>
<sequence length="934" mass="105114">MTRHLTLCFILLIILIDKSEACFCDHYPWTHWSSCSKSCNSGTQSRQRQIVVNDYYRDNSCDQLCTKQETRQCNVETCPINCVLGDYGTWSDCDPCIRKQVKVRSVLRPSQFGGQPCTEPLVTFQPCVPSELCKIEETDCKNKFLCDSGRCIPSKLKCNGENDCGDNSDERNCGRTKPVCSRTYTPIPSVQLMGAGFHFLAGEPRGDVPDNSFTGGICKSVRSSRTSNPHRVPANLENVNFEVQTIEDDLKTDFYKDLATIGKNKNEDRSLSGEKKDSFYVPIFYSSKKSENFQRNSGFKNAIEASHKKDSSFVRIHKVIKVLNFTMKTTDLQLSDVFLKALIHLPLEYNFALYSRIFDDFGTHYFTSGSLGGKYDLLYQFSRQELQNSGLTEEETRNCVRYETKKRFLFFTKTYKEDRCTTNRLSEKYKGSFLQGSEKSISLVQGGRSQQAAALAWEKGSSGPEANVFSEWLESVKENPAVVDYELAPIIDLVRNIPCAVTKRNNLRKALQEYAAKFDPCQCAPCPNNGRPRLSGTECLCVCQSGTYGENCEKRSPDYKSNAVDGNWGCWSSWSACNAAYRRSRSRECNNPEPQRGGQRCEGKHWQEEDCTFSIMEKVGQPCISDDEEIKEVDLAEPEADSGCPQPPLPENAFVWNEKKLYSVGEEVEISCLTGFKAVGYQYFRCLPDRTWRQGDVECQRTECLKPVVQDVLTISPFQSVYKIGESIELTCPRGFVVAGPSRYTCKGDSWTPPIPNSLSCEKDILTKSKGLCQPGQKQSGSECVCMSPEEDCSSYSEDLCIFDEGSSQYFTSSACKFLAEKCLNSNQFHFVHAGSCQEGPQLEWGLERLKLAMKSTKRVPCGYDTCYDWEKCSAHTSNCVCLLPPQCPKDENQLHCVKMGSSMRGKTVNICTLGAVRCANRKVEILNPGRCLD</sequence>
<reference key="1">
    <citation type="journal article" date="2004" name="Immunobiology">
        <title>Molecular basis for complement component 6 (C6) deficiency in rats and mice.</title>
        <authorList>
            <person name="Bhole D."/>
            <person name="Stahl G.L."/>
        </authorList>
    </citation>
    <scope>NUCLEOTIDE SEQUENCE [MRNA]</scope>
    <source>
        <strain>PVG.RT1L</strain>
    </source>
</reference>